<organism>
    <name type="scientific">Saccharomyces cerevisiae (strain ATCC 204508 / S288c)</name>
    <name type="common">Baker's yeast</name>
    <dbReference type="NCBI Taxonomy" id="559292"/>
    <lineage>
        <taxon>Eukaryota</taxon>
        <taxon>Fungi</taxon>
        <taxon>Dikarya</taxon>
        <taxon>Ascomycota</taxon>
        <taxon>Saccharomycotina</taxon>
        <taxon>Saccharomycetes</taxon>
        <taxon>Saccharomycetales</taxon>
        <taxon>Saccharomycetaceae</taxon>
        <taxon>Saccharomyces</taxon>
    </lineage>
</organism>
<gene>
    <name type="primary">TOP2</name>
    <name type="synonym">TOR3</name>
    <name type="ordered locus">YNL088W</name>
    <name type="ORF">N2244</name>
</gene>
<proteinExistence type="evidence at protein level"/>
<sequence>MSTEPVSASDKYQKISQLEHILKRPDTYIGSVETQEQLQWIYDEETDCMIEKNVTIVPGLFKIFDEILVNAADNKVRDPSMKRIDVNIHAEEHTIEVKNDGKGIPIEIHNKENIYIPEMIFGHLLTSSNYDDDEKKVTGGRNGYGAKLCNIFSTEFILETADLNVGQKYVQKWENNMSICHPPKITSYKKGPSYTKVTFKPDLTRFGMKELDNDILGVMRRRVYDINGSVRDINVYLNGKSLKIRNFKNYVELYLKSLEKKRQLDNGEDGAAKSDIPTILYERINNRWEVAFAVSDISFQQISFVNSIATTMGGTHVNYITDQIVKKISEILKKKKKKSVKSFQIKNNMFIFINCLIENPAFTSQTKEQLTTRVKDFGSRCEIPLEYINKIMKTDLATRMFEIADANEENALKKSDGTRKSRITNYPKLEDANKAGTKEGYKCTLVLTEGDSALSLAVAGLAVVGRDYYGCYPLRGKMLNVREASADQILKNAEIQAIKKIMGLQHRKKYEDTKSLRYGHLMIMTDQDHDGSHIKGLIINFLESSFPGLLDIQGFLLEFITPIIKVSITKPTKNTIAFYNMPDYEKWREEESHKFTWKQKYYKGLGTSLAQEVREYFSNLDRHLKIFHSLQGNDKDYIDLAFSKKKADDRKEWLRQYEPGTVLDPTLKEIPISDFINKELILFSLADNIRSIPNVLDGFKPGQRKVLYGCFKKNLKSELKVAQLAPYVSECTAYHHGEQSLAQTIIGLAQNFVGSNNIYLLLPNGAFGTRATGGKDAAAARYIYTELNKLTRKIFHPADDPLYKYIQEDEKTVEPEWYLPILPMILVNGAEGIGTGWSTYIPPFNPLEIIKNIRHLMNDEELEQMHPWFRGWTGTIEEIEPLRYRMYGRIEQIGDNVLEITELPARTWTSTIKEYLLLGLSGNDKIKPWIKDMEEQHDDNIKFIITLSPEEMAKTRKIGFYERFKLISPISLMNMVAFDPHGKIKKYNSVNEILSEFYYVRLEYYQKRKDHMSERLQWEVEKYSFQVKFIKMIIEKELTVTNKPRNAIIQELENLGFPRFNKEGKPYYGSPNDEIAEQINDVKGATSDEEDEESSHEDTENVINGPEELYGTYEYLLGMRIWSLTKERYQKLLKQKQEKETELENLLKLSAKDIWNTDLKAFEVGYQEFLQRDAEARGGNVPNKGSKTKGKGKRKLVDDEDYDPSKKNKKSTARKGKKIKLEDKNFERILLEQKLVTKSKAPTKIKKEKTPSVSETKTEEEENAPSSTSSSSIFDIKKEDKDEGELSKISNKFKKISTIFDKMGSTSATSKENTPEQDDVATKKNQTTAKKTAVKPKLAKKPVRKQQKVVELSGESDLEILDSYTDREDSNKDEDDAIPQRSRRQRSSRAASVPKKSYVETLELSDDSFIEDDEEENQGSDVSFNEED</sequence>
<feature type="chain" id="PRO_0000145387" description="DNA topoisomerase 2">
    <location>
        <begin position="1"/>
        <end position="1428"/>
    </location>
</feature>
<feature type="domain" description="Toprim" evidence="1">
    <location>
        <begin position="443"/>
        <end position="557"/>
    </location>
</feature>
<feature type="domain" description="Topo IIA-type catalytic" evidence="2">
    <location>
        <begin position="692"/>
        <end position="1159"/>
    </location>
</feature>
<feature type="region of interest" description="Interaction with DNA" evidence="12">
    <location>
        <begin position="333"/>
        <end position="336"/>
    </location>
</feature>
<feature type="region of interest" description="Interaction with DNA" evidence="8">
    <location>
        <begin position="965"/>
        <end position="974"/>
    </location>
</feature>
<feature type="region of interest" description="Disordered" evidence="3">
    <location>
        <begin position="1083"/>
        <end position="1102"/>
    </location>
</feature>
<feature type="region of interest" description="Disordered" evidence="3">
    <location>
        <begin position="1176"/>
        <end position="1217"/>
    </location>
</feature>
<feature type="region of interest" description="Disordered" evidence="3">
    <location>
        <begin position="1240"/>
        <end position="1288"/>
    </location>
</feature>
<feature type="region of interest" description="Disordered" evidence="3">
    <location>
        <begin position="1303"/>
        <end position="1428"/>
    </location>
</feature>
<feature type="compositionally biased region" description="Basic residues" evidence="3">
    <location>
        <begin position="1207"/>
        <end position="1217"/>
    </location>
</feature>
<feature type="compositionally biased region" description="Basic and acidic residues" evidence="3">
    <location>
        <begin position="1275"/>
        <end position="1286"/>
    </location>
</feature>
<feature type="compositionally biased region" description="Basic residues" evidence="3">
    <location>
        <begin position="1332"/>
        <end position="1347"/>
    </location>
</feature>
<feature type="compositionally biased region" description="Acidic residues" evidence="3">
    <location>
        <begin position="1403"/>
        <end position="1428"/>
    </location>
</feature>
<feature type="active site" description="O-(5'-phospho-DNA)-tyrosine intermediate" evidence="2 8 10">
    <location>
        <position position="782"/>
    </location>
</feature>
<feature type="binding site" evidence="4">
    <location>
        <position position="70"/>
    </location>
    <ligand>
        <name>ATP</name>
        <dbReference type="ChEBI" id="CHEBI:30616"/>
    </ligand>
</feature>
<feature type="binding site" evidence="4">
    <location>
        <position position="99"/>
    </location>
    <ligand>
        <name>ATP</name>
        <dbReference type="ChEBI" id="CHEBI:30616"/>
    </ligand>
</feature>
<feature type="binding site" evidence="4">
    <location>
        <begin position="127"/>
        <end position="129"/>
    </location>
    <ligand>
        <name>ATP</name>
        <dbReference type="ChEBI" id="CHEBI:30616"/>
    </ligand>
</feature>
<feature type="binding site" evidence="4">
    <location>
        <begin position="140"/>
        <end position="147"/>
    </location>
    <ligand>
        <name>ATP</name>
        <dbReference type="ChEBI" id="CHEBI:30616"/>
    </ligand>
</feature>
<feature type="binding site" evidence="4">
    <location>
        <begin position="365"/>
        <end position="367"/>
    </location>
    <ligand>
        <name>ATP</name>
        <dbReference type="ChEBI" id="CHEBI:30616"/>
    </ligand>
</feature>
<feature type="binding site" evidence="1 7">
    <location>
        <position position="449"/>
    </location>
    <ligand>
        <name>Mg(2+)</name>
        <dbReference type="ChEBI" id="CHEBI:18420"/>
        <label>1</label>
        <note>catalytic</note>
    </ligand>
</feature>
<feature type="binding site" evidence="1 7">
    <location>
        <position position="526"/>
    </location>
    <ligand>
        <name>Mg(2+)</name>
        <dbReference type="ChEBI" id="CHEBI:18420"/>
        <label>1</label>
        <note>catalytic</note>
    </ligand>
</feature>
<feature type="binding site" evidence="1 7">
    <location>
        <position position="526"/>
    </location>
    <ligand>
        <name>Mg(2+)</name>
        <dbReference type="ChEBI" id="CHEBI:18420"/>
        <label>2</label>
    </ligand>
</feature>
<feature type="binding site" evidence="1 7">
    <location>
        <position position="528"/>
    </location>
    <ligand>
        <name>Mg(2+)</name>
        <dbReference type="ChEBI" id="CHEBI:18420"/>
        <label>2</label>
    </ligand>
</feature>
<feature type="site" description="Interaction with DNA" evidence="1">
    <location>
        <position position="477"/>
    </location>
</feature>
<feature type="site" description="Interaction with DNA" evidence="8">
    <location>
        <position position="480"/>
    </location>
</feature>
<feature type="site" description="Interaction with DNA" evidence="8">
    <location>
        <position position="650"/>
    </location>
</feature>
<feature type="site" description="Interaction with DNA" evidence="8">
    <location>
        <position position="651"/>
    </location>
</feature>
<feature type="site" description="Interaction with DNA" evidence="8">
    <location>
        <position position="700"/>
    </location>
</feature>
<feature type="site" description="Interaction with DNA" evidence="1">
    <location>
        <position position="734"/>
    </location>
</feature>
<feature type="site" description="Interaction with DNA" evidence="1">
    <location>
        <position position="740"/>
    </location>
</feature>
<feature type="site" description="Transition state stabilizer" evidence="8">
    <location>
        <position position="781"/>
    </location>
</feature>
<feature type="site" description="Important for DNA bending; intercalates between base pairs of target DNA" evidence="7">
    <location>
        <position position="833"/>
    </location>
</feature>
<feature type="site" description="Interaction with DNA" evidence="1">
    <location>
        <position position="908"/>
    </location>
</feature>
<feature type="modified residue" description="Phosphothreonine; by CK2" evidence="5">
    <location>
        <position position="1086"/>
    </location>
</feature>
<feature type="modified residue" description="Phosphoserine; by CK2" evidence="5">
    <location>
        <position position="1087"/>
    </location>
</feature>
<feature type="modified residue" description="Phosphoserine" evidence="13">
    <location>
        <position position="1252"/>
    </location>
</feature>
<feature type="modified residue" description="Phosphothreonine; by CK2" evidence="5">
    <location>
        <position position="1258"/>
    </location>
</feature>
<feature type="modified residue" description="Phosphoserine; by CK2" evidence="5">
    <location>
        <position position="1266"/>
    </location>
</feature>
<feature type="modified residue" description="Phosphoserine; by CK2" evidence="5">
    <location>
        <position position="1269"/>
    </location>
</feature>
<feature type="modified residue" description="Phosphoserine; by CK2" evidence="5">
    <location>
        <position position="1272"/>
    </location>
</feature>
<feature type="modified residue" description="Phosphoserine; by CK2" evidence="5">
    <location>
        <position position="1353"/>
    </location>
</feature>
<feature type="modified residue" description="Phosphoserine; by CK2" evidence="5">
    <location>
        <position position="1356"/>
    </location>
</feature>
<feature type="modified residue" description="Phosphoserine; by CK2" evidence="5">
    <location>
        <position position="1408"/>
    </location>
</feature>
<feature type="modified residue" description="Phosphoserine; by CK2" evidence="5">
    <location>
        <position position="1423"/>
    </location>
</feature>
<feature type="mutagenesis site" description="Reduced enzyme activity; abolishes stimulation of ATPase activity upon DNA binding.">
    <original>KKKK</original>
    <variation>AAAA</variation>
    <location>
        <begin position="333"/>
        <end position="336"/>
    </location>
</feature>
<feature type="mutagenesis site" description="Strongly reduced enzyme activity; abolishes stimulation of ATPase activity upon DNA binding.">
    <original>KKKK</original>
    <variation>AEEA</variation>
    <location>
        <begin position="333"/>
        <end position="336"/>
    </location>
</feature>
<feature type="mutagenesis site" description="Loss of enzyme activity." evidence="10">
    <original>R</original>
    <variation>A</variation>
    <location>
        <position position="690"/>
    </location>
</feature>
<feature type="mutagenesis site" description="Strongly reduced enzyme activity." evidence="10">
    <original>D</original>
    <variation>A</variation>
    <location>
        <position position="697"/>
    </location>
</feature>
<feature type="mutagenesis site" description="Strongly reduced enzyme activity." evidence="10">
    <original>K</original>
    <variation>A</variation>
    <location>
        <position position="700"/>
    </location>
</feature>
<feature type="mutagenesis site" description="Strongly reduced enzyme activity." evidence="10">
    <original>R</original>
    <variation>A</variation>
    <location>
        <position position="704"/>
    </location>
</feature>
<feature type="mutagenesis site" description="No effect." evidence="10">
    <original>H</original>
    <variation>A</variation>
    <location>
        <position position="736"/>
    </location>
</feature>
<feature type="mutagenesis site" description="Strongly reduced enzyme activity." evidence="10">
    <original>R</original>
    <variation>A</variation>
    <location>
        <position position="781"/>
    </location>
</feature>
<feature type="mutagenesis site" description="Loss of enzyme activity." evidence="10">
    <original>Y</original>
    <variation>F</variation>
    <location>
        <position position="782"/>
    </location>
</feature>
<feature type="mutagenesis site" description="Strongly reduced enzyme activity." evidence="10">
    <original>N</original>
    <variation>A</variation>
    <location>
        <position position="828"/>
    </location>
</feature>
<feature type="sequence conflict" description="In Ref. 1; AAB36610." evidence="11" ref="1">
    <original>N</original>
    <variation>NN</variation>
    <location>
        <position position="74"/>
    </location>
</feature>
<feature type="sequence conflict" description="In Ref. 1; AAB36610." evidence="11" ref="1">
    <original>P</original>
    <variation>L</variation>
    <location>
        <position position="547"/>
    </location>
</feature>
<feature type="sequence conflict" description="In Ref. 1; AAB36610." evidence="11" ref="1">
    <original>W</original>
    <variation>R</variation>
    <location>
        <position position="837"/>
    </location>
</feature>
<feature type="helix" evidence="16">
    <location>
        <begin position="8"/>
        <end position="11"/>
    </location>
</feature>
<feature type="strand" evidence="16">
    <location>
        <begin position="12"/>
        <end position="14"/>
    </location>
</feature>
<feature type="helix" evidence="16">
    <location>
        <begin position="17"/>
        <end position="23"/>
    </location>
</feature>
<feature type="helix" evidence="16">
    <location>
        <begin position="26"/>
        <end position="29"/>
    </location>
</feature>
<feature type="strand" evidence="16">
    <location>
        <begin position="35"/>
        <end position="43"/>
    </location>
</feature>
<feature type="turn" evidence="16">
    <location>
        <begin position="44"/>
        <end position="47"/>
    </location>
</feature>
<feature type="strand" evidence="16">
    <location>
        <begin position="48"/>
        <end position="56"/>
    </location>
</feature>
<feature type="helix" evidence="16">
    <location>
        <begin position="58"/>
        <end position="77"/>
    </location>
</feature>
<feature type="strand" evidence="16">
    <location>
        <begin position="83"/>
        <end position="89"/>
    </location>
</feature>
<feature type="turn" evidence="16">
    <location>
        <begin position="90"/>
        <end position="93"/>
    </location>
</feature>
<feature type="strand" evidence="16">
    <location>
        <begin position="94"/>
        <end position="102"/>
    </location>
</feature>
<feature type="turn" evidence="16">
    <location>
        <begin position="110"/>
        <end position="112"/>
    </location>
</feature>
<feature type="helix" evidence="16">
    <location>
        <begin position="116"/>
        <end position="122"/>
    </location>
</feature>
<feature type="strand" evidence="16">
    <location>
        <begin position="123"/>
        <end position="128"/>
    </location>
</feature>
<feature type="helix" evidence="16">
    <location>
        <begin position="145"/>
        <end position="151"/>
    </location>
</feature>
<feature type="strand" evidence="16">
    <location>
        <begin position="153"/>
        <end position="162"/>
    </location>
</feature>
<feature type="turn" evidence="16">
    <location>
        <begin position="163"/>
        <end position="166"/>
    </location>
</feature>
<feature type="strand" evidence="16">
    <location>
        <begin position="167"/>
        <end position="174"/>
    </location>
</feature>
<feature type="turn" evidence="16">
    <location>
        <begin position="175"/>
        <end position="178"/>
    </location>
</feature>
<feature type="strand" evidence="16">
    <location>
        <begin position="184"/>
        <end position="187"/>
    </location>
</feature>
<feature type="strand" evidence="16">
    <location>
        <begin position="194"/>
        <end position="201"/>
    </location>
</feature>
<feature type="helix" evidence="16">
    <location>
        <begin position="203"/>
        <end position="206"/>
    </location>
</feature>
<feature type="helix" evidence="16">
    <location>
        <begin position="213"/>
        <end position="229"/>
    </location>
</feature>
<feature type="strand" evidence="16">
    <location>
        <begin position="234"/>
        <end position="237"/>
    </location>
</feature>
<feature type="helix" evidence="16">
    <location>
        <begin position="247"/>
        <end position="252"/>
    </location>
</feature>
<feature type="turn" evidence="16">
    <location>
        <begin position="253"/>
        <end position="257"/>
    </location>
</feature>
<feature type="strand" evidence="16">
    <location>
        <begin position="280"/>
        <end position="285"/>
    </location>
</feature>
<feature type="strand" evidence="16">
    <location>
        <begin position="288"/>
        <end position="294"/>
    </location>
</feature>
<feature type="strand" evidence="16">
    <location>
        <begin position="296"/>
        <end position="298"/>
    </location>
</feature>
<feature type="strand" evidence="16">
    <location>
        <begin position="300"/>
        <end position="305"/>
    </location>
</feature>
<feature type="helix" evidence="16">
    <location>
        <begin position="315"/>
        <end position="332"/>
    </location>
</feature>
<feature type="helix" evidence="16">
    <location>
        <begin position="342"/>
        <end position="346"/>
    </location>
</feature>
<feature type="strand" evidence="16">
    <location>
        <begin position="349"/>
        <end position="355"/>
    </location>
</feature>
<feature type="strand" evidence="16">
    <location>
        <begin position="362"/>
        <end position="364"/>
    </location>
</feature>
<feature type="helix" evidence="16">
    <location>
        <begin position="374"/>
        <end position="376"/>
    </location>
</feature>
<feature type="strand" evidence="16">
    <location>
        <begin position="377"/>
        <end position="379"/>
    </location>
</feature>
<feature type="helix" evidence="16">
    <location>
        <begin position="385"/>
        <end position="391"/>
    </location>
</feature>
<feature type="helix" evidence="16">
    <location>
        <begin position="395"/>
        <end position="405"/>
    </location>
</feature>
<feature type="turn" evidence="15">
    <location>
        <begin position="433"/>
        <end position="436"/>
    </location>
</feature>
<feature type="helix" evidence="15">
    <location>
        <begin position="438"/>
        <end position="442"/>
    </location>
</feature>
<feature type="strand" evidence="15">
    <location>
        <begin position="444"/>
        <end position="450"/>
    </location>
</feature>
<feature type="helix" evidence="15">
    <location>
        <begin position="451"/>
        <end position="464"/>
    </location>
</feature>
<feature type="strand" evidence="15">
    <location>
        <begin position="466"/>
        <end position="475"/>
    </location>
</feature>
<feature type="strand" evidence="14">
    <location>
        <begin position="479"/>
        <end position="481"/>
    </location>
</feature>
<feature type="helix" evidence="17">
    <location>
        <begin position="486"/>
        <end position="491"/>
    </location>
</feature>
<feature type="helix" evidence="15">
    <location>
        <begin position="492"/>
        <end position="502"/>
    </location>
</feature>
<feature type="turn" evidence="14">
    <location>
        <begin position="503"/>
        <end position="505"/>
    </location>
</feature>
<feature type="strand" evidence="15">
    <location>
        <begin position="506"/>
        <end position="508"/>
    </location>
</feature>
<feature type="strand" evidence="15">
    <location>
        <begin position="513"/>
        <end position="517"/>
    </location>
</feature>
<feature type="strand" evidence="15">
    <location>
        <begin position="519"/>
        <end position="525"/>
    </location>
</feature>
<feature type="strand" evidence="14">
    <location>
        <begin position="527"/>
        <end position="530"/>
    </location>
</feature>
<feature type="helix" evidence="15">
    <location>
        <begin position="534"/>
        <end position="545"/>
    </location>
</feature>
<feature type="helix" evidence="14">
    <location>
        <begin position="547"/>
        <end position="550"/>
    </location>
</feature>
<feature type="strand" evidence="15">
    <location>
        <begin position="555"/>
        <end position="558"/>
    </location>
</feature>
<feature type="strand" evidence="15">
    <location>
        <begin position="563"/>
        <end position="568"/>
    </location>
</feature>
<feature type="strand" evidence="15">
    <location>
        <begin position="574"/>
        <end position="580"/>
    </location>
</feature>
<feature type="helix" evidence="15">
    <location>
        <begin position="581"/>
        <end position="590"/>
    </location>
</feature>
<feature type="turn" evidence="15">
    <location>
        <begin position="591"/>
        <end position="594"/>
    </location>
</feature>
<feature type="strand" evidence="15">
    <location>
        <begin position="597"/>
        <end position="599"/>
    </location>
</feature>
<feature type="helix" evidence="15">
    <location>
        <begin position="609"/>
        <end position="629"/>
    </location>
</feature>
<feature type="helix" evidence="17">
    <location>
        <begin position="634"/>
        <end position="642"/>
    </location>
</feature>
<feature type="helix" evidence="17">
    <location>
        <begin position="647"/>
        <end position="656"/>
    </location>
</feature>
<feature type="strand" evidence="17">
    <location>
        <begin position="668"/>
        <end position="670"/>
    </location>
</feature>
<feature type="helix" evidence="15">
    <location>
        <begin position="678"/>
        <end position="691"/>
    </location>
</feature>
<feature type="turn" evidence="15">
    <location>
        <begin position="695"/>
        <end position="697"/>
    </location>
</feature>
<feature type="helix" evidence="15">
    <location>
        <begin position="701"/>
        <end position="713"/>
    </location>
</feature>
<feature type="helix" evidence="15">
    <location>
        <begin position="721"/>
        <end position="732"/>
    </location>
</feature>
<feature type="strand" evidence="15">
    <location>
        <begin position="736"/>
        <end position="738"/>
    </location>
</feature>
<feature type="helix" evidence="15">
    <location>
        <begin position="741"/>
        <end position="749"/>
    </location>
</feature>
<feature type="turn" evidence="17">
    <location>
        <begin position="753"/>
        <end position="755"/>
    </location>
</feature>
<feature type="strand" evidence="15">
    <location>
        <begin position="760"/>
        <end position="765"/>
    </location>
</feature>
<feature type="turn" evidence="15">
    <location>
        <begin position="770"/>
        <end position="773"/>
    </location>
</feature>
<feature type="turn" evidence="15">
    <location>
        <begin position="780"/>
        <end position="782"/>
    </location>
</feature>
<feature type="strand" evidence="15">
    <location>
        <begin position="784"/>
        <end position="787"/>
    </location>
</feature>
<feature type="helix" evidence="15">
    <location>
        <begin position="791"/>
        <end position="794"/>
    </location>
</feature>
<feature type="helix" evidence="15">
    <location>
        <begin position="797"/>
        <end position="802"/>
    </location>
</feature>
<feature type="strand" evidence="15">
    <location>
        <begin position="805"/>
        <end position="808"/>
    </location>
</feature>
<feature type="strand" evidence="15">
    <location>
        <begin position="811"/>
        <end position="816"/>
    </location>
</feature>
<feature type="helix" evidence="15">
    <location>
        <begin position="824"/>
        <end position="827"/>
    </location>
</feature>
<feature type="strand" evidence="15">
    <location>
        <begin position="830"/>
        <end position="833"/>
    </location>
</feature>
<feature type="strand" evidence="15">
    <location>
        <begin position="838"/>
        <end position="841"/>
    </location>
</feature>
<feature type="helix" evidence="15">
    <location>
        <begin position="846"/>
        <end position="857"/>
    </location>
</feature>
<feature type="strand" evidence="15">
    <location>
        <begin position="874"/>
        <end position="880"/>
    </location>
</feature>
<feature type="strand" evidence="15">
    <location>
        <begin position="883"/>
        <end position="887"/>
    </location>
</feature>
<feature type="strand" evidence="15">
    <location>
        <begin position="889"/>
        <end position="894"/>
    </location>
</feature>
<feature type="strand" evidence="15">
    <location>
        <begin position="897"/>
        <end position="902"/>
    </location>
</feature>
<feature type="helix" evidence="15">
    <location>
        <begin position="909"/>
        <end position="920"/>
    </location>
</feature>
<feature type="strand" evidence="14">
    <location>
        <begin position="924"/>
        <end position="926"/>
    </location>
</feature>
<feature type="strand" evidence="15">
    <location>
        <begin position="932"/>
        <end position="935"/>
    </location>
</feature>
<feature type="strand" evidence="15">
    <location>
        <begin position="938"/>
        <end position="940"/>
    </location>
</feature>
<feature type="strand" evidence="15">
    <location>
        <begin position="943"/>
        <end position="946"/>
    </location>
</feature>
<feature type="helix" evidence="15">
    <location>
        <begin position="949"/>
        <end position="958"/>
    </location>
</feature>
<feature type="helix" evidence="15">
    <location>
        <begin position="960"/>
        <end position="963"/>
    </location>
</feature>
<feature type="strand" evidence="15">
    <location>
        <begin position="967"/>
        <end position="971"/>
    </location>
</feature>
<feature type="strand" evidence="15">
    <location>
        <begin position="975"/>
        <end position="978"/>
    </location>
</feature>
<feature type="strand" evidence="15">
    <location>
        <begin position="984"/>
        <end position="989"/>
    </location>
</feature>
<feature type="helix" evidence="15">
    <location>
        <begin position="990"/>
        <end position="1034"/>
    </location>
</feature>
<feature type="strand" evidence="14">
    <location>
        <begin position="1041"/>
        <end position="1043"/>
    </location>
</feature>
<feature type="helix" evidence="15">
    <location>
        <begin position="1045"/>
        <end position="1054"/>
    </location>
</feature>
<feature type="turn" evidence="15">
    <location>
        <begin position="1108"/>
        <end position="1110"/>
    </location>
</feature>
<feature type="helix" evidence="15">
    <location>
        <begin position="1114"/>
        <end position="1117"/>
    </location>
</feature>
<feature type="helix" evidence="15">
    <location>
        <begin position="1121"/>
        <end position="1124"/>
    </location>
</feature>
<feature type="helix" evidence="15">
    <location>
        <begin position="1126"/>
        <end position="1147"/>
    </location>
</feature>
<feature type="helix" evidence="15">
    <location>
        <begin position="1151"/>
        <end position="1176"/>
    </location>
</feature>
<keyword id="KW-0002">3D-structure</keyword>
<keyword id="KW-0067">ATP-binding</keyword>
<keyword id="KW-0238">DNA-binding</keyword>
<keyword id="KW-0413">Isomerase</keyword>
<keyword id="KW-0460">Magnesium</keyword>
<keyword id="KW-0479">Metal-binding</keyword>
<keyword id="KW-0547">Nucleotide-binding</keyword>
<keyword id="KW-0539">Nucleus</keyword>
<keyword id="KW-0597">Phosphoprotein</keyword>
<keyword id="KW-1185">Reference proteome</keyword>
<keyword id="KW-0799">Topoisomerase</keyword>
<name>TOP2_YEAST</name>
<protein>
    <recommendedName>
        <fullName>DNA topoisomerase 2</fullName>
        <ecNumber evidence="1 7 9 10">5.6.2.2</ecNumber>
    </recommendedName>
    <alternativeName>
        <fullName>DNA topoisomerase II</fullName>
    </alternativeName>
</protein>
<dbReference type="EC" id="5.6.2.2" evidence="1 7 9 10"/>
<dbReference type="EMBL" id="M13814">
    <property type="protein sequence ID" value="AAB36610.1"/>
    <property type="molecule type" value="Genomic_DNA"/>
</dbReference>
<dbReference type="EMBL" id="AF458969">
    <property type="protein sequence ID" value="AAM00518.1"/>
    <property type="molecule type" value="Genomic_DNA"/>
</dbReference>
<dbReference type="EMBL" id="AF458971">
    <property type="protein sequence ID" value="AAM00530.1"/>
    <property type="molecule type" value="Genomic_DNA"/>
</dbReference>
<dbReference type="EMBL" id="AF458972">
    <property type="protein sequence ID" value="AAM00536.1"/>
    <property type="molecule type" value="Genomic_DNA"/>
</dbReference>
<dbReference type="EMBL" id="X89016">
    <property type="protein sequence ID" value="CAA61422.1"/>
    <property type="molecule type" value="Genomic_DNA"/>
</dbReference>
<dbReference type="EMBL" id="Z71364">
    <property type="protein sequence ID" value="CAA95964.1"/>
    <property type="molecule type" value="Genomic_DNA"/>
</dbReference>
<dbReference type="EMBL" id="BK006947">
    <property type="protein sequence ID" value="DAA10457.1"/>
    <property type="molecule type" value="Genomic_DNA"/>
</dbReference>
<dbReference type="PIR" id="S57534">
    <property type="entry name" value="ISBYT2"/>
</dbReference>
<dbReference type="RefSeq" id="NP_014311.3">
    <property type="nucleotide sequence ID" value="NM_001182926.3"/>
</dbReference>
<dbReference type="PDB" id="1BGW">
    <property type="method" value="X-ray"/>
    <property type="resolution" value="2.70 A"/>
    <property type="chains" value="A=409-1201"/>
</dbReference>
<dbReference type="PDB" id="1BJT">
    <property type="method" value="X-ray"/>
    <property type="resolution" value="2.50 A"/>
    <property type="chains" value="A=409-1201"/>
</dbReference>
<dbReference type="PDB" id="1PVG">
    <property type="method" value="X-ray"/>
    <property type="resolution" value="1.80 A"/>
    <property type="chains" value="A/B=1-413"/>
</dbReference>
<dbReference type="PDB" id="1QZR">
    <property type="method" value="X-ray"/>
    <property type="resolution" value="1.90 A"/>
    <property type="chains" value="A/B=1-413"/>
</dbReference>
<dbReference type="PDB" id="2RGR">
    <property type="method" value="X-ray"/>
    <property type="resolution" value="3.00 A"/>
    <property type="chains" value="A=419-1177"/>
</dbReference>
<dbReference type="PDB" id="3L4J">
    <property type="method" value="X-ray"/>
    <property type="resolution" value="2.48 A"/>
    <property type="chains" value="A=421-1177"/>
</dbReference>
<dbReference type="PDB" id="3L4K">
    <property type="method" value="X-ray"/>
    <property type="resolution" value="2.98 A"/>
    <property type="chains" value="A=421-1177"/>
</dbReference>
<dbReference type="PDB" id="4GFH">
    <property type="method" value="X-ray"/>
    <property type="resolution" value="4.41 A"/>
    <property type="chains" value="A/F=1-1177"/>
</dbReference>
<dbReference type="PDBsum" id="1BGW"/>
<dbReference type="PDBsum" id="1BJT"/>
<dbReference type="PDBsum" id="1PVG"/>
<dbReference type="PDBsum" id="1QZR"/>
<dbReference type="PDBsum" id="2RGR"/>
<dbReference type="PDBsum" id="3L4J"/>
<dbReference type="PDBsum" id="3L4K"/>
<dbReference type="PDBsum" id="4GFH"/>
<dbReference type="SMR" id="P06786"/>
<dbReference type="BioGRID" id="35735">
    <property type="interactions" value="287"/>
</dbReference>
<dbReference type="DIP" id="DIP-2300N"/>
<dbReference type="FunCoup" id="P06786">
    <property type="interactions" value="1452"/>
</dbReference>
<dbReference type="IntAct" id="P06786">
    <property type="interactions" value="86"/>
</dbReference>
<dbReference type="MINT" id="P06786"/>
<dbReference type="STRING" id="4932.YNL088W"/>
<dbReference type="BindingDB" id="P06786"/>
<dbReference type="ChEMBL" id="CHEMBL5290"/>
<dbReference type="iPTMnet" id="P06786"/>
<dbReference type="PaxDb" id="4932-YNL088W"/>
<dbReference type="PeptideAtlas" id="P06786"/>
<dbReference type="EnsemblFungi" id="YNL088W_mRNA">
    <property type="protein sequence ID" value="YNL088W"/>
    <property type="gene ID" value="YNL088W"/>
</dbReference>
<dbReference type="GeneID" id="855636"/>
<dbReference type="KEGG" id="sce:YNL088W"/>
<dbReference type="AGR" id="SGD:S000005032"/>
<dbReference type="SGD" id="S000005032">
    <property type="gene designation" value="TOP2"/>
</dbReference>
<dbReference type="VEuPathDB" id="FungiDB:YNL088W"/>
<dbReference type="eggNOG" id="KOG0355">
    <property type="taxonomic scope" value="Eukaryota"/>
</dbReference>
<dbReference type="GeneTree" id="ENSGT00940000168342"/>
<dbReference type="HOGENOM" id="CLU_001935_1_1_1"/>
<dbReference type="InParanoid" id="P06786"/>
<dbReference type="OMA" id="TWTQDFK"/>
<dbReference type="OrthoDB" id="276498at2759"/>
<dbReference type="BioCyc" id="YEAST:G3O-33117-MONOMER"/>
<dbReference type="BRENDA" id="5.6.2.2">
    <property type="organism ID" value="984"/>
</dbReference>
<dbReference type="Reactome" id="R-SCE-4615885">
    <property type="pathway name" value="SUMOylation of DNA replication proteins"/>
</dbReference>
<dbReference type="BioGRID-ORCS" id="855636">
    <property type="hits" value="1 hit in 10 CRISPR screens"/>
</dbReference>
<dbReference type="CD-CODE" id="876000F7">
    <property type="entry name" value="Centrosome"/>
</dbReference>
<dbReference type="CD-CODE" id="BA0A263B">
    <property type="entry name" value="eukaryotic topoisomerase ii"/>
</dbReference>
<dbReference type="EvolutionaryTrace" id="P06786"/>
<dbReference type="PRO" id="PR:P06786"/>
<dbReference type="Proteomes" id="UP000002311">
    <property type="component" value="Chromosome XIV"/>
</dbReference>
<dbReference type="RNAct" id="P06786">
    <property type="molecule type" value="protein"/>
</dbReference>
<dbReference type="GO" id="GO:0097047">
    <property type="term" value="C:DNA replication termination region"/>
    <property type="evidence" value="ECO:0000314"/>
    <property type="project" value="SGD"/>
</dbReference>
<dbReference type="GO" id="GO:0005739">
    <property type="term" value="C:mitochondrion"/>
    <property type="evidence" value="ECO:0007005"/>
    <property type="project" value="SGD"/>
</dbReference>
<dbReference type="GO" id="GO:0005634">
    <property type="term" value="C:nucleus"/>
    <property type="evidence" value="ECO:0000314"/>
    <property type="project" value="SGD"/>
</dbReference>
<dbReference type="GO" id="GO:0000795">
    <property type="term" value="C:synaptonemal complex"/>
    <property type="evidence" value="ECO:0000314"/>
    <property type="project" value="SGD"/>
</dbReference>
<dbReference type="GO" id="GO:0005524">
    <property type="term" value="F:ATP binding"/>
    <property type="evidence" value="ECO:0007669"/>
    <property type="project" value="UniProtKB-KW"/>
</dbReference>
<dbReference type="GO" id="GO:0003677">
    <property type="term" value="F:DNA binding"/>
    <property type="evidence" value="ECO:0007669"/>
    <property type="project" value="UniProtKB-KW"/>
</dbReference>
<dbReference type="GO" id="GO:0003918">
    <property type="term" value="F:DNA topoisomerase type II (double strand cut, ATP-hydrolyzing) activity"/>
    <property type="evidence" value="ECO:0000314"/>
    <property type="project" value="SGD"/>
</dbReference>
<dbReference type="GO" id="GO:0042802">
    <property type="term" value="F:identical protein binding"/>
    <property type="evidence" value="ECO:0000353"/>
    <property type="project" value="IntAct"/>
</dbReference>
<dbReference type="GO" id="GO:0046872">
    <property type="term" value="F:metal ion binding"/>
    <property type="evidence" value="ECO:0007669"/>
    <property type="project" value="UniProtKB-KW"/>
</dbReference>
<dbReference type="GO" id="GO:0006325">
    <property type="term" value="P:chromatin organization"/>
    <property type="evidence" value="ECO:0000315"/>
    <property type="project" value="SGD"/>
</dbReference>
<dbReference type="GO" id="GO:0031055">
    <property type="term" value="P:chromatin remodeling at centromere"/>
    <property type="evidence" value="ECO:0000315"/>
    <property type="project" value="SGD"/>
</dbReference>
<dbReference type="GO" id="GO:0006271">
    <property type="term" value="P:DNA strand elongation involved in DNA replication"/>
    <property type="evidence" value="ECO:0000315"/>
    <property type="project" value="SGD"/>
</dbReference>
<dbReference type="GO" id="GO:0006265">
    <property type="term" value="P:DNA topological change"/>
    <property type="evidence" value="ECO:0000314"/>
    <property type="project" value="SGD"/>
</dbReference>
<dbReference type="GO" id="GO:0007131">
    <property type="term" value="P:reciprocal meiotic recombination"/>
    <property type="evidence" value="ECO:0000315"/>
    <property type="project" value="SGD"/>
</dbReference>
<dbReference type="GO" id="GO:0000019">
    <property type="term" value="P:regulation of mitotic recombination"/>
    <property type="evidence" value="ECO:0000315"/>
    <property type="project" value="SGD"/>
</dbReference>
<dbReference type="GO" id="GO:0097046">
    <property type="term" value="P:replication fork progression beyond termination site"/>
    <property type="evidence" value="ECO:0000315"/>
    <property type="project" value="SGD"/>
</dbReference>
<dbReference type="GO" id="GO:0000712">
    <property type="term" value="P:resolution of meiotic recombination intermediates"/>
    <property type="evidence" value="ECO:0000318"/>
    <property type="project" value="GO_Central"/>
</dbReference>
<dbReference type="GO" id="GO:0009303">
    <property type="term" value="P:rRNA transcription"/>
    <property type="evidence" value="ECO:0000316"/>
    <property type="project" value="SGD"/>
</dbReference>
<dbReference type="GO" id="GO:0000819">
    <property type="term" value="P:sister chromatid segregation"/>
    <property type="evidence" value="ECO:0000318"/>
    <property type="project" value="GO_Central"/>
</dbReference>
<dbReference type="GO" id="GO:0000722">
    <property type="term" value="P:telomere maintenance via recombination"/>
    <property type="evidence" value="ECO:0000316"/>
    <property type="project" value="SGD"/>
</dbReference>
<dbReference type="CDD" id="cd16930">
    <property type="entry name" value="HATPase_TopII-like"/>
    <property type="match status" value="1"/>
</dbReference>
<dbReference type="CDD" id="cd00187">
    <property type="entry name" value="TOP4c"/>
    <property type="match status" value="1"/>
</dbReference>
<dbReference type="CDD" id="cd03481">
    <property type="entry name" value="TopoIIA_Trans_ScTopoIIA"/>
    <property type="match status" value="1"/>
</dbReference>
<dbReference type="CDD" id="cd03365">
    <property type="entry name" value="TOPRIM_TopoIIA"/>
    <property type="match status" value="1"/>
</dbReference>
<dbReference type="DisProt" id="DP00076"/>
<dbReference type="FunFam" id="1.10.268.10:FF:000003">
    <property type="entry name" value="DNA topoisomerase 2"/>
    <property type="match status" value="1"/>
</dbReference>
<dbReference type="FunFam" id="3.30.1360.40:FF:000011">
    <property type="entry name" value="DNA topoisomerase 2"/>
    <property type="match status" value="1"/>
</dbReference>
<dbReference type="FunFam" id="3.30.1490.30:FF:000001">
    <property type="entry name" value="DNA topoisomerase 2"/>
    <property type="match status" value="1"/>
</dbReference>
<dbReference type="FunFam" id="3.30.230.10:FF:000079">
    <property type="entry name" value="DNA topoisomerase 2"/>
    <property type="match status" value="1"/>
</dbReference>
<dbReference type="FunFam" id="3.30.565.10:FF:000004">
    <property type="entry name" value="DNA topoisomerase 2"/>
    <property type="match status" value="1"/>
</dbReference>
<dbReference type="FunFam" id="3.40.50.670:FF:000001">
    <property type="entry name" value="DNA topoisomerase 2"/>
    <property type="match status" value="2"/>
</dbReference>
<dbReference type="FunFam" id="3.90.199.10:FF:000002">
    <property type="entry name" value="DNA topoisomerase 2"/>
    <property type="match status" value="1"/>
</dbReference>
<dbReference type="Gene3D" id="3.30.1360.40">
    <property type="match status" value="1"/>
</dbReference>
<dbReference type="Gene3D" id="3.30.1490.30">
    <property type="match status" value="1"/>
</dbReference>
<dbReference type="Gene3D" id="3.30.230.10">
    <property type="match status" value="1"/>
</dbReference>
<dbReference type="Gene3D" id="3.40.50.670">
    <property type="match status" value="1"/>
</dbReference>
<dbReference type="Gene3D" id="3.30.565.10">
    <property type="entry name" value="Histidine kinase-like ATPase, C-terminal domain"/>
    <property type="match status" value="1"/>
</dbReference>
<dbReference type="Gene3D" id="3.90.199.10">
    <property type="entry name" value="Topoisomerase II, domain 5"/>
    <property type="match status" value="1"/>
</dbReference>
<dbReference type="Gene3D" id="1.10.268.10">
    <property type="entry name" value="Topoisomerase, domain 3"/>
    <property type="match status" value="1"/>
</dbReference>
<dbReference type="InterPro" id="IPR050634">
    <property type="entry name" value="DNA_Topoisomerase_II"/>
</dbReference>
<dbReference type="InterPro" id="IPR036890">
    <property type="entry name" value="HATPase_C_sf"/>
</dbReference>
<dbReference type="InterPro" id="IPR020568">
    <property type="entry name" value="Ribosomal_Su5_D2-typ_SF"/>
</dbReference>
<dbReference type="InterPro" id="IPR014721">
    <property type="entry name" value="Ribsml_uS5_D2-typ_fold_subgr"/>
</dbReference>
<dbReference type="InterPro" id="IPR001241">
    <property type="entry name" value="Topo_IIA"/>
</dbReference>
<dbReference type="InterPro" id="IPR013760">
    <property type="entry name" value="Topo_IIA-like_dom_sf"/>
</dbReference>
<dbReference type="InterPro" id="IPR013758">
    <property type="entry name" value="Topo_IIA_A/C_ab"/>
</dbReference>
<dbReference type="InterPro" id="IPR013757">
    <property type="entry name" value="Topo_IIA_A_a_sf"/>
</dbReference>
<dbReference type="InterPro" id="IPR013759">
    <property type="entry name" value="Topo_IIA_B_C"/>
</dbReference>
<dbReference type="InterPro" id="IPR013506">
    <property type="entry name" value="Topo_IIA_bsu_dom2"/>
</dbReference>
<dbReference type="InterPro" id="IPR002205">
    <property type="entry name" value="Topo_IIA_dom_A"/>
</dbReference>
<dbReference type="InterPro" id="IPR001154">
    <property type="entry name" value="TopoII_euk"/>
</dbReference>
<dbReference type="InterPro" id="IPR018522">
    <property type="entry name" value="TopoIIA_CS"/>
</dbReference>
<dbReference type="InterPro" id="IPR031660">
    <property type="entry name" value="TOPRIM_C"/>
</dbReference>
<dbReference type="InterPro" id="IPR006171">
    <property type="entry name" value="TOPRIM_dom"/>
</dbReference>
<dbReference type="InterPro" id="IPR034157">
    <property type="entry name" value="TOPRIM_TopoII"/>
</dbReference>
<dbReference type="PANTHER" id="PTHR10169:SF38">
    <property type="entry name" value="DNA TOPOISOMERASE 2"/>
    <property type="match status" value="1"/>
</dbReference>
<dbReference type="PANTHER" id="PTHR10169">
    <property type="entry name" value="DNA TOPOISOMERASE/GYRASE"/>
    <property type="match status" value="1"/>
</dbReference>
<dbReference type="Pfam" id="PF00204">
    <property type="entry name" value="DNA_gyraseB"/>
    <property type="match status" value="1"/>
</dbReference>
<dbReference type="Pfam" id="PF00521">
    <property type="entry name" value="DNA_topoisoIV"/>
    <property type="match status" value="1"/>
</dbReference>
<dbReference type="Pfam" id="PF02518">
    <property type="entry name" value="HATPase_c"/>
    <property type="match status" value="1"/>
</dbReference>
<dbReference type="Pfam" id="PF01751">
    <property type="entry name" value="Toprim"/>
    <property type="match status" value="1"/>
</dbReference>
<dbReference type="Pfam" id="PF16898">
    <property type="entry name" value="TOPRIM_C"/>
    <property type="match status" value="1"/>
</dbReference>
<dbReference type="PRINTS" id="PR01158">
    <property type="entry name" value="TOPISMRASEII"/>
</dbReference>
<dbReference type="PRINTS" id="PR00418">
    <property type="entry name" value="TPI2FAMILY"/>
</dbReference>
<dbReference type="SMART" id="SM00387">
    <property type="entry name" value="HATPase_c"/>
    <property type="match status" value="1"/>
</dbReference>
<dbReference type="SMART" id="SM00433">
    <property type="entry name" value="TOP2c"/>
    <property type="match status" value="1"/>
</dbReference>
<dbReference type="SMART" id="SM00434">
    <property type="entry name" value="TOP4c"/>
    <property type="match status" value="1"/>
</dbReference>
<dbReference type="SUPFAM" id="SSF55874">
    <property type="entry name" value="ATPase domain of HSP90 chaperone/DNA topoisomerase II/histidine kinase"/>
    <property type="match status" value="1"/>
</dbReference>
<dbReference type="SUPFAM" id="SSF54211">
    <property type="entry name" value="Ribosomal protein S5 domain 2-like"/>
    <property type="match status" value="1"/>
</dbReference>
<dbReference type="SUPFAM" id="SSF56719">
    <property type="entry name" value="Type II DNA topoisomerase"/>
    <property type="match status" value="1"/>
</dbReference>
<dbReference type="PROSITE" id="PS52040">
    <property type="entry name" value="TOPO_IIA"/>
    <property type="match status" value="1"/>
</dbReference>
<dbReference type="PROSITE" id="PS00177">
    <property type="entry name" value="TOPOISOMERASE_II"/>
    <property type="match status" value="1"/>
</dbReference>
<dbReference type="PROSITE" id="PS50880">
    <property type="entry name" value="TOPRIM"/>
    <property type="match status" value="1"/>
</dbReference>
<reference key="1">
    <citation type="journal article" date="1986" name="J. Biol. Chem.">
        <title>The complete nucleotide sequence of the structural gene TOP2 of yeast DNA topoisomerase II.</title>
        <authorList>
            <person name="Giaever F."/>
            <person name="Lynn R."/>
            <person name="Goto T."/>
            <person name="Wang J.C."/>
        </authorList>
    </citation>
    <scope>NUCLEOTIDE SEQUENCE [GENOMIC DNA]</scope>
</reference>
<reference key="2">
    <citation type="journal article" date="2002" name="Nature">
        <title>Dissecting the architecture of a quantitative trait locus in yeast.</title>
        <authorList>
            <person name="Steinmetz L.M."/>
            <person name="Sinha H."/>
            <person name="Richards D.R."/>
            <person name="Spiegelman J.I."/>
            <person name="Oefner P.J."/>
            <person name="McCusker J.H."/>
            <person name="Davis R.W."/>
        </authorList>
    </citation>
    <scope>NUCLEOTIDE SEQUENCE [GENOMIC DNA]</scope>
    <source>
        <strain>S96</strain>
        <strain>YJM 320</strain>
        <strain>YJM 326</strain>
    </source>
</reference>
<reference key="3">
    <citation type="journal article" date="1996" name="Yeast">
        <title>The sequence of a 17,933 bp segment of Saccharomyces cerevisiae chromosome XIV contains the RHO2, TOP2, MKT1 and END3 genes and five new open reading frames.</title>
        <authorList>
            <person name="Soler-Mira A."/>
            <person name="Saiz J.E."/>
            <person name="Ballesta J.P.G."/>
            <person name="Remacha M.A."/>
        </authorList>
    </citation>
    <scope>NUCLEOTIDE SEQUENCE [GENOMIC DNA]</scope>
    <source>
        <strain>ATCC 96604 / S288c / FY1679</strain>
    </source>
</reference>
<reference key="4">
    <citation type="journal article" date="1997" name="Nature">
        <title>The nucleotide sequence of Saccharomyces cerevisiae chromosome XIV and its evolutionary implications.</title>
        <authorList>
            <person name="Philippsen P."/>
            <person name="Kleine K."/>
            <person name="Poehlmann R."/>
            <person name="Duesterhoeft A."/>
            <person name="Hamberg K."/>
            <person name="Hegemann J.H."/>
            <person name="Obermaier B."/>
            <person name="Urrestarazu L.A."/>
            <person name="Aert R."/>
            <person name="Albermann K."/>
            <person name="Altmann R."/>
            <person name="Andre B."/>
            <person name="Baladron V."/>
            <person name="Ballesta J.P.G."/>
            <person name="Becam A.-M."/>
            <person name="Beinhauer J.D."/>
            <person name="Boskovic J."/>
            <person name="Buitrago M.J."/>
            <person name="Bussereau F."/>
            <person name="Coster F."/>
            <person name="Crouzet M."/>
            <person name="D'Angelo M."/>
            <person name="Dal Pero F."/>
            <person name="De Antoni A."/>
            <person name="del Rey F."/>
            <person name="Doignon F."/>
            <person name="Domdey H."/>
            <person name="Dubois E."/>
            <person name="Fiedler T.A."/>
            <person name="Fleig U."/>
            <person name="Floeth M."/>
            <person name="Fritz C."/>
            <person name="Gaillardin C."/>
            <person name="Garcia-Cantalejo J.M."/>
            <person name="Glansdorff N."/>
            <person name="Goffeau A."/>
            <person name="Gueldener U."/>
            <person name="Herbert C.J."/>
            <person name="Heumann K."/>
            <person name="Heuss-Neitzel D."/>
            <person name="Hilbert H."/>
            <person name="Hinni K."/>
            <person name="Iraqui Houssaini I."/>
            <person name="Jacquet M."/>
            <person name="Jimenez A."/>
            <person name="Jonniaux J.-L."/>
            <person name="Karpfinger-Hartl L."/>
            <person name="Lanfranchi G."/>
            <person name="Lepingle A."/>
            <person name="Levesque H."/>
            <person name="Lyck R."/>
            <person name="Maftahi M."/>
            <person name="Mallet L."/>
            <person name="Maurer C.T.C."/>
            <person name="Messenguy F."/>
            <person name="Mewes H.-W."/>
            <person name="Moestl D."/>
            <person name="Nasr F."/>
            <person name="Nicaud J.-M."/>
            <person name="Niedenthal R.K."/>
            <person name="Pandolfo D."/>
            <person name="Pierard A."/>
            <person name="Piravandi E."/>
            <person name="Planta R.J."/>
            <person name="Pohl T.M."/>
            <person name="Purnelle B."/>
            <person name="Rebischung C."/>
            <person name="Remacha M.A."/>
            <person name="Revuelta J.L."/>
            <person name="Rinke M."/>
            <person name="Saiz J.E."/>
            <person name="Sartorello F."/>
            <person name="Scherens B."/>
            <person name="Sen-Gupta M."/>
            <person name="Soler-Mira A."/>
            <person name="Urbanus J.H.M."/>
            <person name="Valle G."/>
            <person name="Van Dyck L."/>
            <person name="Verhasselt P."/>
            <person name="Vierendeels F."/>
            <person name="Vissers S."/>
            <person name="Voet M."/>
            <person name="Volckaert G."/>
            <person name="Wach A."/>
            <person name="Wambutt R."/>
            <person name="Wedler H."/>
            <person name="Zollner A."/>
            <person name="Hani J."/>
        </authorList>
    </citation>
    <scope>NUCLEOTIDE SEQUENCE [LARGE SCALE GENOMIC DNA]</scope>
    <source>
        <strain>ATCC 204508 / S288c</strain>
    </source>
</reference>
<reference key="5">
    <citation type="journal article" date="2014" name="G3 (Bethesda)">
        <title>The reference genome sequence of Saccharomyces cerevisiae: Then and now.</title>
        <authorList>
            <person name="Engel S.R."/>
            <person name="Dietrich F.S."/>
            <person name="Fisk D.G."/>
            <person name="Binkley G."/>
            <person name="Balakrishnan R."/>
            <person name="Costanzo M.C."/>
            <person name="Dwight S.S."/>
            <person name="Hitz B.C."/>
            <person name="Karra K."/>
            <person name="Nash R.S."/>
            <person name="Weng S."/>
            <person name="Wong E.D."/>
            <person name="Lloyd P."/>
            <person name="Skrzypek M.S."/>
            <person name="Miyasato S.R."/>
            <person name="Simison M."/>
            <person name="Cherry J.M."/>
        </authorList>
    </citation>
    <scope>GENOME REANNOTATION</scope>
    <source>
        <strain>ATCC 204508 / S288c</strain>
    </source>
</reference>
<reference key="6">
    <citation type="journal article" date="1992" name="Antonie Van Leeuwenhoek">
        <title>Topoisomerase II: its functions and phosphorylation.</title>
        <authorList>
            <person name="Gasser S.M."/>
            <person name="Walter R."/>
            <person name="Dang Q."/>
            <person name="Cardenas M.E."/>
        </authorList>
    </citation>
    <scope>REVIEW ON PHOSPHORYLATION</scope>
</reference>
<reference key="7">
    <citation type="journal article" date="1992" name="EMBO J.">
        <title>Casein kinase II phosphorylates the eukaryote-specific C-terminal domain of topoisomerase II in vivo.</title>
        <authorList>
            <person name="Cardenas M.E."/>
            <person name="Dang Q."/>
            <person name="Glover C.V."/>
            <person name="Gasser S.M."/>
        </authorList>
    </citation>
    <scope>PHOSPHORYLATION AT THR-1086; SER-1087; THR-1258; SER-1266; SER-1269; SER-1272; SER-1353; SER-1356; SER-1408 AND SER-1423</scope>
</reference>
<reference key="8">
    <citation type="journal article" date="1998" name="J. Biol. Chem.">
        <title>Identification of active site residues in the 'GyrA' half of yeast DNA topoisomerase II.</title>
        <authorList>
            <person name="Liu Q."/>
            <person name="Wang J.C."/>
        </authorList>
    </citation>
    <scope>SUBUNIT</scope>
    <scope>ACTIVE SITE</scope>
    <scope>CATALYTIC ACTIVITY</scope>
    <scope>FUNCTION</scope>
    <scope>MUTAGENESIS OF ARG-690; ASP-697; LYS-700; ARG-704; HIS-736; ARG-781; TYR-782 AND ASN-828</scope>
</reference>
<reference key="9">
    <citation type="journal article" date="2003" name="Nature">
        <title>Global analysis of protein expression in yeast.</title>
        <authorList>
            <person name="Ghaemmaghami S."/>
            <person name="Huh W.-K."/>
            <person name="Bower K."/>
            <person name="Howson R.W."/>
            <person name="Belle A."/>
            <person name="Dephoure N."/>
            <person name="O'Shea E.K."/>
            <person name="Weissman J.S."/>
        </authorList>
    </citation>
    <scope>LEVEL OF PROTEIN EXPRESSION [LARGE SCALE ANALYSIS]</scope>
</reference>
<reference key="10">
    <citation type="journal article" date="2007" name="J. Proteome Res.">
        <title>Large-scale phosphorylation analysis of alpha-factor-arrested Saccharomyces cerevisiae.</title>
        <authorList>
            <person name="Li X."/>
            <person name="Gerber S.A."/>
            <person name="Rudner A.D."/>
            <person name="Beausoleil S.A."/>
            <person name="Haas W."/>
            <person name="Villen J."/>
            <person name="Elias J.E."/>
            <person name="Gygi S.P."/>
        </authorList>
    </citation>
    <scope>IDENTIFICATION BY MASS SPECTROMETRY [LARGE SCALE ANALYSIS]</scope>
    <source>
        <strain>ADR376</strain>
    </source>
</reference>
<reference key="11">
    <citation type="journal article" date="2008" name="Mol. Cell. Proteomics">
        <title>A multidimensional chromatography technology for in-depth phosphoproteome analysis.</title>
        <authorList>
            <person name="Albuquerque C.P."/>
            <person name="Smolka M.B."/>
            <person name="Payne S.H."/>
            <person name="Bafna V."/>
            <person name="Eng J."/>
            <person name="Zhou H."/>
        </authorList>
    </citation>
    <scope>IDENTIFICATION BY MASS SPECTROMETRY [LARGE SCALE ANALYSIS]</scope>
</reference>
<reference key="12">
    <citation type="journal article" date="2009" name="Science">
        <title>Global analysis of Cdk1 substrate phosphorylation sites provides insights into evolution.</title>
        <authorList>
            <person name="Holt L.J."/>
            <person name="Tuch B.B."/>
            <person name="Villen J."/>
            <person name="Johnson A.D."/>
            <person name="Gygi S.P."/>
            <person name="Morgan D.O."/>
        </authorList>
    </citation>
    <scope>PHOSPHORYLATION [LARGE SCALE ANALYSIS] AT SER-1252</scope>
    <scope>IDENTIFICATION BY MASS SPECTROMETRY [LARGE SCALE ANALYSIS]</scope>
</reference>
<reference key="13">
    <citation type="journal article" date="1996" name="Nature">
        <title>Structure and mechanism of DNA topoisomerase II.</title>
        <authorList>
            <person name="Berger J.M."/>
            <person name="Gamblin S.J."/>
            <person name="Harrison S.C."/>
            <person name="Wang J.C."/>
        </authorList>
    </citation>
    <scope>X-RAY CRYSTALLOGRAPHY (2.7 ANGSTROMS) OF 410-1202</scope>
</reference>
<reference key="14">
    <citation type="journal article" date="1999" name="Nat. Struct. Biol.">
        <title>Quaternary changes in topoisomerase II may direct orthogonal movement of two DNA strands.</title>
        <authorList>
            <person name="Fass D."/>
            <person name="Bogden C.E."/>
            <person name="Berger J.M."/>
        </authorList>
    </citation>
    <scope>X-RAY CRYSTALLOGRAPHY (2.5 ANGSTROMS) OF 409-1201</scope>
</reference>
<reference key="15">
    <citation type="journal article" date="2003" name="Proc. Natl. Acad. Sci. U.S.A.">
        <title>Structure of the topoisomerase II ATPase region and its mechanism of inhibition by the chemotherapeutic agent ICRF-187.</title>
        <authorList>
            <person name="Classen S."/>
            <person name="Olland S."/>
            <person name="Berger J.M."/>
        </authorList>
    </citation>
    <scope>X-RAY CRYSTALLOGRAPHY (1.8 ANGSTROMS) OF 1-413 IN COMPLEX WITH ATP ANALOG</scope>
    <scope>SUBUNIT</scope>
</reference>
<reference key="16">
    <citation type="journal article" date="2007" name="Nature">
        <title>Structural basis for gate-DNA recognition and bending by type IIA topoisomerases.</title>
        <authorList>
            <person name="Dong K.C."/>
            <person name="Berger J.M."/>
        </authorList>
    </citation>
    <scope>X-RAY CRYSTALLOGRAPHY (3.0 ANGSTROMS) OF 419-1177 IN COMPLEX WITH DNA AND MAGNESIUM</scope>
    <scope>CATALYTIC ACTIVITY</scope>
    <scope>COFACTOR</scope>
    <scope>SITE</scope>
</reference>
<reference key="17">
    <citation type="journal article" date="2010" name="Nature">
        <title>A novel and unified two-metal mechanism for DNA cleavage by type II and IA topoisomerases.</title>
        <authorList>
            <person name="Schmidt B.H."/>
            <person name="Burgin A.B."/>
            <person name="Deweese J.E."/>
            <person name="Osheroff N."/>
            <person name="Berger J.M."/>
        </authorList>
    </citation>
    <scope>X-RAY CRYSTALLOGRAPHY (2.48 ANGSTROMS) OF 421-1177 IN COMPLEX WITH DNA AND ZINC IONS</scope>
    <scope>ACTIVE SITE</scope>
    <scope>ENZYME MECHANISM</scope>
    <scope>COFACTOR</scope>
    <scope>SITE</scope>
</reference>
<reference key="18">
    <citation type="journal article" date="2012" name="Nat. Struct. Mol. Biol.">
        <title>Structure of a topoisomerase II-DNA-nucleotide complex reveals a new control mechanism for ATPase activity.</title>
        <authorList>
            <person name="Schmidt B.H."/>
            <person name="Osheroff N."/>
            <person name="Berger J.M."/>
        </authorList>
    </citation>
    <scope>X-RAY CRYSTALLOGRAPHY (4.4 ANGSTROMS) OF 1-1177 IN COMPLEX WITH DNA AND ATP ANALOG</scope>
    <scope>CATALYTIC ACTIVITY</scope>
    <scope>FUNCTION</scope>
    <scope>SUBUNIT</scope>
</reference>
<comment type="function">
    <text evidence="9 10">Control of topological states of DNA by transient breakage and subsequent rejoining of DNA strands. Topoisomerase II makes double-strand breaks. Essential during mitosis and meiosis for proper segregation of daughter chromosomes.</text>
</comment>
<comment type="catalytic activity">
    <reaction evidence="1 7 9 10">
        <text>ATP-dependent breakage, passage and rejoining of double-stranded DNA.</text>
        <dbReference type="EC" id="5.6.2.2"/>
    </reaction>
</comment>
<comment type="cofactor">
    <cofactor evidence="1 7 8">
        <name>Mg(2+)</name>
        <dbReference type="ChEBI" id="CHEBI:18420"/>
    </cofactor>
    <cofactor evidence="1 7 8">
        <name>Mn(2+)</name>
        <dbReference type="ChEBI" id="CHEBI:29035"/>
    </cofactor>
    <cofactor evidence="1 7 8">
        <name>Ca(2+)</name>
        <dbReference type="ChEBI" id="CHEBI:29108"/>
    </cofactor>
    <text evidence="1 7 8">Binds two Mg(2+) per subunit. The magnesium ions form salt bridges with both the protein and the DNA. Can also accept other divalent metal cations, such as Mn(2+) or Ca(2+).</text>
</comment>
<comment type="subunit">
    <text evidence="4 7 8 9 10">Homodimer.</text>
</comment>
<comment type="interaction">
    <interactant intactId="EBI-19352">
        <id>P06786</id>
    </interactant>
    <interactant intactId="EBI-9860">
        <id>P24583</id>
        <label>PKC1</label>
    </interactant>
    <organismsDiffer>false</organismsDiffer>
    <experiments>2</experiments>
</comment>
<comment type="interaction">
    <interactant intactId="EBI-19352">
        <id>P06786</id>
    </interactant>
    <interactant intactId="EBI-19352">
        <id>P06786</id>
        <label>TOP2</label>
    </interactant>
    <organismsDiffer>false</organismsDiffer>
    <experiments>5</experiments>
</comment>
<comment type="subcellular location">
    <subcellularLocation>
        <location>Nucleus</location>
    </subcellularLocation>
</comment>
<comment type="PTM">
    <text evidence="5">Phosphorylation enhances the activity. Stimulates decatenation activity.</text>
</comment>
<comment type="miscellaneous">
    <text>In yeast topoisomerase II can substitute topoisomerase I for the relaxing activity.</text>
</comment>
<comment type="miscellaneous">
    <text>Eukaryotic topoisomerase I and II can relax both negative and positive supercoils, whereas prokaryotic enzymes relax only negative supercoils.</text>
</comment>
<comment type="miscellaneous">
    <text evidence="6">Present with 5730 molecules/cell in log phase SD medium.</text>
</comment>
<comment type="similarity">
    <text evidence="11">Belongs to the type II topoisomerase family.</text>
</comment>
<evidence type="ECO:0000255" key="1">
    <source>
        <dbReference type="PROSITE-ProRule" id="PRU00995"/>
    </source>
</evidence>
<evidence type="ECO:0000255" key="2">
    <source>
        <dbReference type="PROSITE-ProRule" id="PRU01384"/>
    </source>
</evidence>
<evidence type="ECO:0000256" key="3">
    <source>
        <dbReference type="SAM" id="MobiDB-lite"/>
    </source>
</evidence>
<evidence type="ECO:0000269" key="4">
    <source>
    </source>
</evidence>
<evidence type="ECO:0000269" key="5">
    <source>
    </source>
</evidence>
<evidence type="ECO:0000269" key="6">
    <source>
    </source>
</evidence>
<evidence type="ECO:0000269" key="7">
    <source>
    </source>
</evidence>
<evidence type="ECO:0000269" key="8">
    <source>
    </source>
</evidence>
<evidence type="ECO:0000269" key="9">
    <source>
    </source>
</evidence>
<evidence type="ECO:0000269" key="10">
    <source>
    </source>
</evidence>
<evidence type="ECO:0000305" key="11"/>
<evidence type="ECO:0000305" key="12">
    <source>
    </source>
</evidence>
<evidence type="ECO:0007744" key="13">
    <source>
    </source>
</evidence>
<evidence type="ECO:0007829" key="14">
    <source>
        <dbReference type="PDB" id="1BGW"/>
    </source>
</evidence>
<evidence type="ECO:0007829" key="15">
    <source>
        <dbReference type="PDB" id="1BJT"/>
    </source>
</evidence>
<evidence type="ECO:0007829" key="16">
    <source>
        <dbReference type="PDB" id="1PVG"/>
    </source>
</evidence>
<evidence type="ECO:0007829" key="17">
    <source>
        <dbReference type="PDB" id="2RGR"/>
    </source>
</evidence>
<accession>P06786</accession>
<accession>D6W191</accession>